<dbReference type="EMBL" id="AF159393">
    <property type="protein sequence ID" value="AAD49238.1"/>
    <property type="molecule type" value="Genomic_DNA"/>
</dbReference>
<dbReference type="SMR" id="Q9TEY6"/>
<dbReference type="GO" id="GO:0005743">
    <property type="term" value="C:mitochondrial inner membrane"/>
    <property type="evidence" value="ECO:0007669"/>
    <property type="project" value="UniProtKB-SubCell"/>
</dbReference>
<dbReference type="GO" id="GO:0045275">
    <property type="term" value="C:respiratory chain complex III"/>
    <property type="evidence" value="ECO:0007669"/>
    <property type="project" value="InterPro"/>
</dbReference>
<dbReference type="GO" id="GO:0046872">
    <property type="term" value="F:metal ion binding"/>
    <property type="evidence" value="ECO:0007669"/>
    <property type="project" value="UniProtKB-KW"/>
</dbReference>
<dbReference type="GO" id="GO:0008121">
    <property type="term" value="F:ubiquinol-cytochrome-c reductase activity"/>
    <property type="evidence" value="ECO:0007669"/>
    <property type="project" value="InterPro"/>
</dbReference>
<dbReference type="GO" id="GO:0006122">
    <property type="term" value="P:mitochondrial electron transport, ubiquinol to cytochrome c"/>
    <property type="evidence" value="ECO:0007669"/>
    <property type="project" value="TreeGrafter"/>
</dbReference>
<dbReference type="CDD" id="cd00290">
    <property type="entry name" value="cytochrome_b_C"/>
    <property type="match status" value="1"/>
</dbReference>
<dbReference type="CDD" id="cd00284">
    <property type="entry name" value="Cytochrome_b_N"/>
    <property type="match status" value="1"/>
</dbReference>
<dbReference type="FunFam" id="1.20.810.10:FF:000002">
    <property type="entry name" value="Cytochrome b"/>
    <property type="match status" value="1"/>
</dbReference>
<dbReference type="Gene3D" id="1.20.810.10">
    <property type="entry name" value="Cytochrome Bc1 Complex, Chain C"/>
    <property type="match status" value="1"/>
</dbReference>
<dbReference type="InterPro" id="IPR005798">
    <property type="entry name" value="Cyt_b/b6_C"/>
</dbReference>
<dbReference type="InterPro" id="IPR036150">
    <property type="entry name" value="Cyt_b/b6_C_sf"/>
</dbReference>
<dbReference type="InterPro" id="IPR005797">
    <property type="entry name" value="Cyt_b/b6_N"/>
</dbReference>
<dbReference type="InterPro" id="IPR027387">
    <property type="entry name" value="Cytb/b6-like_sf"/>
</dbReference>
<dbReference type="InterPro" id="IPR030689">
    <property type="entry name" value="Cytochrome_b"/>
</dbReference>
<dbReference type="InterPro" id="IPR048260">
    <property type="entry name" value="Cytochrome_b_C_euk/bac"/>
</dbReference>
<dbReference type="InterPro" id="IPR048259">
    <property type="entry name" value="Cytochrome_b_N_euk/bac"/>
</dbReference>
<dbReference type="InterPro" id="IPR016174">
    <property type="entry name" value="Di-haem_cyt_TM"/>
</dbReference>
<dbReference type="PANTHER" id="PTHR19271">
    <property type="entry name" value="CYTOCHROME B"/>
    <property type="match status" value="1"/>
</dbReference>
<dbReference type="PANTHER" id="PTHR19271:SF16">
    <property type="entry name" value="CYTOCHROME B"/>
    <property type="match status" value="1"/>
</dbReference>
<dbReference type="Pfam" id="PF00032">
    <property type="entry name" value="Cytochrom_B_C"/>
    <property type="match status" value="1"/>
</dbReference>
<dbReference type="Pfam" id="PF00033">
    <property type="entry name" value="Cytochrome_B"/>
    <property type="match status" value="1"/>
</dbReference>
<dbReference type="PIRSF" id="PIRSF038885">
    <property type="entry name" value="COB"/>
    <property type="match status" value="1"/>
</dbReference>
<dbReference type="SUPFAM" id="SSF81648">
    <property type="entry name" value="a domain/subunit of cytochrome bc1 complex (Ubiquinol-cytochrome c reductase)"/>
    <property type="match status" value="1"/>
</dbReference>
<dbReference type="SUPFAM" id="SSF81342">
    <property type="entry name" value="Transmembrane di-heme cytochromes"/>
    <property type="match status" value="1"/>
</dbReference>
<dbReference type="PROSITE" id="PS51003">
    <property type="entry name" value="CYTB_CTER"/>
    <property type="match status" value="1"/>
</dbReference>
<dbReference type="PROSITE" id="PS51002">
    <property type="entry name" value="CYTB_NTER"/>
    <property type="match status" value="1"/>
</dbReference>
<keyword id="KW-0249">Electron transport</keyword>
<keyword id="KW-0349">Heme</keyword>
<keyword id="KW-0408">Iron</keyword>
<keyword id="KW-0472">Membrane</keyword>
<keyword id="KW-0479">Metal-binding</keyword>
<keyword id="KW-0496">Mitochondrion</keyword>
<keyword id="KW-0999">Mitochondrion inner membrane</keyword>
<keyword id="KW-0679">Respiratory chain</keyword>
<keyword id="KW-0812">Transmembrane</keyword>
<keyword id="KW-1133">Transmembrane helix</keyword>
<keyword id="KW-0813">Transport</keyword>
<keyword id="KW-0830">Ubiquinone</keyword>
<organism>
    <name type="scientific">Apodemus uralensis</name>
    <name type="common">Herb field mouse</name>
    <name type="synonym">Apodemus microps</name>
    <dbReference type="NCBI Taxonomy" id="134910"/>
    <lineage>
        <taxon>Eukaryota</taxon>
        <taxon>Metazoa</taxon>
        <taxon>Chordata</taxon>
        <taxon>Craniata</taxon>
        <taxon>Vertebrata</taxon>
        <taxon>Euteleostomi</taxon>
        <taxon>Mammalia</taxon>
        <taxon>Eutheria</taxon>
        <taxon>Euarchontoglires</taxon>
        <taxon>Glires</taxon>
        <taxon>Rodentia</taxon>
        <taxon>Myomorpha</taxon>
        <taxon>Muroidea</taxon>
        <taxon>Muridae</taxon>
        <taxon>Murinae</taxon>
        <taxon>Apodemus</taxon>
        <taxon>Sylvaemus group</taxon>
    </lineage>
</organism>
<comment type="function">
    <text evidence="2">Component of the ubiquinol-cytochrome c reductase complex (complex III or cytochrome b-c1 complex) that is part of the mitochondrial respiratory chain. The b-c1 complex mediates electron transfer from ubiquinol to cytochrome c. Contributes to the generation of a proton gradient across the mitochondrial membrane that is then used for ATP synthesis.</text>
</comment>
<comment type="cofactor">
    <cofactor evidence="2">
        <name>heme b</name>
        <dbReference type="ChEBI" id="CHEBI:60344"/>
    </cofactor>
    <text evidence="2">Binds 2 heme b groups non-covalently.</text>
</comment>
<comment type="subunit">
    <text evidence="2">The cytochrome bc1 complex contains 11 subunits: 3 respiratory subunits (MT-CYB, CYC1 and UQCRFS1), 2 core proteins (UQCRC1 and UQCRC2) and 6 low-molecular weight proteins (UQCRH/QCR6, UQCRB/QCR7, UQCRQ/QCR8, UQCR10/QCR9, UQCR11/QCR10 and a cleavage product of UQCRFS1). This cytochrome bc1 complex then forms a dimer.</text>
</comment>
<comment type="subcellular location">
    <subcellularLocation>
        <location evidence="2">Mitochondrion inner membrane</location>
        <topology evidence="2">Multi-pass membrane protein</topology>
    </subcellularLocation>
</comment>
<comment type="miscellaneous">
    <text evidence="1">Heme 1 (or BL or b562) is low-potential and absorbs at about 562 nm, and heme 2 (or BH or b566) is high-potential and absorbs at about 566 nm.</text>
</comment>
<comment type="similarity">
    <text evidence="3 4">Belongs to the cytochrome b family.</text>
</comment>
<comment type="caution">
    <text evidence="2">The full-length protein contains only eight transmembrane helices, not nine as predicted by bioinformatics tools.</text>
</comment>
<protein>
    <recommendedName>
        <fullName>Cytochrome b</fullName>
    </recommendedName>
    <alternativeName>
        <fullName>Complex III subunit 3</fullName>
    </alternativeName>
    <alternativeName>
        <fullName>Complex III subunit III</fullName>
    </alternativeName>
    <alternativeName>
        <fullName>Cytochrome b-c1 complex subunit 3</fullName>
    </alternativeName>
    <alternativeName>
        <fullName>Ubiquinol-cytochrome-c reductase complex cytochrome b subunit</fullName>
    </alternativeName>
</protein>
<reference key="1">
    <citation type="journal article" date="2000" name="Mol. Phylogenet. Evol.">
        <title>Molecular phylogeny of European muroid rodents based on complete cytochrome b sequences.</title>
        <authorList>
            <person name="Martin Y."/>
            <person name="Gerlach G."/>
            <person name="Schlotterer C."/>
            <person name="Meyer A."/>
        </authorList>
    </citation>
    <scope>NUCLEOTIDE SEQUENCE [GENOMIC DNA]</scope>
</reference>
<name>CYB_APOUR</name>
<feature type="chain" id="PRO_0000254983" description="Cytochrome b">
    <location>
        <begin position="1"/>
        <end position="381"/>
    </location>
</feature>
<feature type="transmembrane region" description="Helical" evidence="2">
    <location>
        <begin position="33"/>
        <end position="53"/>
    </location>
</feature>
<feature type="transmembrane region" description="Helical" evidence="2">
    <location>
        <begin position="77"/>
        <end position="98"/>
    </location>
</feature>
<feature type="transmembrane region" description="Helical" evidence="2">
    <location>
        <begin position="113"/>
        <end position="133"/>
    </location>
</feature>
<feature type="transmembrane region" description="Helical" evidence="2">
    <location>
        <begin position="178"/>
        <end position="198"/>
    </location>
</feature>
<feature type="transmembrane region" description="Helical" evidence="2">
    <location>
        <begin position="226"/>
        <end position="246"/>
    </location>
</feature>
<feature type="transmembrane region" description="Helical" evidence="2">
    <location>
        <begin position="288"/>
        <end position="308"/>
    </location>
</feature>
<feature type="transmembrane region" description="Helical" evidence="2">
    <location>
        <begin position="320"/>
        <end position="340"/>
    </location>
</feature>
<feature type="transmembrane region" description="Helical" evidence="2">
    <location>
        <begin position="347"/>
        <end position="367"/>
    </location>
</feature>
<feature type="binding site" description="axial binding residue" evidence="2">
    <location>
        <position position="83"/>
    </location>
    <ligand>
        <name>heme b</name>
        <dbReference type="ChEBI" id="CHEBI:60344"/>
        <label>b562</label>
    </ligand>
    <ligandPart>
        <name>Fe</name>
        <dbReference type="ChEBI" id="CHEBI:18248"/>
    </ligandPart>
</feature>
<feature type="binding site" description="axial binding residue" evidence="2">
    <location>
        <position position="97"/>
    </location>
    <ligand>
        <name>heme b</name>
        <dbReference type="ChEBI" id="CHEBI:60344"/>
        <label>b566</label>
    </ligand>
    <ligandPart>
        <name>Fe</name>
        <dbReference type="ChEBI" id="CHEBI:18248"/>
    </ligandPart>
</feature>
<feature type="binding site" description="axial binding residue" evidence="2">
    <location>
        <position position="182"/>
    </location>
    <ligand>
        <name>heme b</name>
        <dbReference type="ChEBI" id="CHEBI:60344"/>
        <label>b562</label>
    </ligand>
    <ligandPart>
        <name>Fe</name>
        <dbReference type="ChEBI" id="CHEBI:18248"/>
    </ligandPart>
</feature>
<feature type="binding site" description="axial binding residue" evidence="2">
    <location>
        <position position="196"/>
    </location>
    <ligand>
        <name>heme b</name>
        <dbReference type="ChEBI" id="CHEBI:60344"/>
        <label>b566</label>
    </ligand>
    <ligandPart>
        <name>Fe</name>
        <dbReference type="ChEBI" id="CHEBI:18248"/>
    </ligandPart>
</feature>
<feature type="binding site" evidence="2">
    <location>
        <position position="201"/>
    </location>
    <ligand>
        <name>a ubiquinone</name>
        <dbReference type="ChEBI" id="CHEBI:16389"/>
    </ligand>
</feature>
<gene>
    <name type="primary">MT-CYB</name>
    <name type="synonym">COB</name>
    <name type="synonym">CYTB</name>
    <name type="synonym">MTCYB</name>
</gene>
<accession>Q9TEY6</accession>
<geneLocation type="mitochondrion"/>
<sequence>MTNIRKTHPLLKIINHSFIDLPTPSNISSWWNFGSLLGMCLTIQILTGLFLAMHYTSDTMTAFSSVTHICRDVNYGWLIRYMHANGASMFFICLFLHVGRGMYYGSYTFMETWNIGVILLFAVMATAFMGYVLPWGQMSFWGATVITNLLSAIPYIGTTLVEWIWGGFSVDKATLTRFFAFHFILPFIIAALVIVHLLFLHETGSNNPTGLNSDADKIPFHPYYTIKDILGVLMMISFLMTLVLFFPDLLGDPDNYMPANPLNTPPHIKPEWYFLFAYAILRSIPNKLGGVLALILSILILALLPFLHTSKQRSLMFRPITQTLYWILVANLLILTWIGGQPVEHPFIIIGQLASISYFSIILVLMPISGIIEDKMLKWNL</sequence>
<evidence type="ECO:0000250" key="1"/>
<evidence type="ECO:0000250" key="2">
    <source>
        <dbReference type="UniProtKB" id="P00157"/>
    </source>
</evidence>
<evidence type="ECO:0000255" key="3">
    <source>
        <dbReference type="PROSITE-ProRule" id="PRU00967"/>
    </source>
</evidence>
<evidence type="ECO:0000255" key="4">
    <source>
        <dbReference type="PROSITE-ProRule" id="PRU00968"/>
    </source>
</evidence>
<proteinExistence type="inferred from homology"/>